<sequence length="218" mass="24589">MGQKVNPIGLRIGIIRDWESRWYAEKDYADLVHEDLKIREYINKRLQDAAVSRVEIERAANRVNVTIHTAKPGMVIGKGGSEVEALRKALTQLTGKREHINIVEIKKPDLDAKLVAENIARQLENRVSFRRAQKQAIQRAMRPGRKGVKTMVVRRLGGAEIARSEHYSEGTVPLHTLRADIDYATAEADTTYGKIGVKVWIYRGEVLPTKKKAEEGGK</sequence>
<accession>P23309</accession>
<comment type="function">
    <text evidence="1">Binds the lower part of the 30S subunit head. Binds mRNA in the 70S ribosome, positioning it for translation.</text>
</comment>
<comment type="subunit">
    <text evidence="1">Part of the 30S ribosomal subunit. Forms a tight complex with proteins S10 and S14.</text>
</comment>
<comment type="similarity">
    <text evidence="1">Belongs to the universal ribosomal protein uS3 family.</text>
</comment>
<proteinExistence type="evidence at protein level"/>
<keyword id="KW-0903">Direct protein sequencing</keyword>
<keyword id="KW-0687">Ribonucleoprotein</keyword>
<keyword id="KW-0689">Ribosomal protein</keyword>
<keyword id="KW-0694">RNA-binding</keyword>
<keyword id="KW-0699">rRNA-binding</keyword>
<protein>
    <recommendedName>
        <fullName evidence="1">Small ribosomal subunit protein uS3</fullName>
    </recommendedName>
    <alternativeName>
        <fullName evidence="3">30S ribosomal protein S3</fullName>
    </alternativeName>
    <alternativeName>
        <fullName>BS2</fullName>
    </alternativeName>
    <alternativeName>
        <fullName>BS3/BS4</fullName>
    </alternativeName>
</protein>
<gene>
    <name evidence="1" type="primary">rpsC</name>
</gene>
<dbReference type="EMBL" id="X54994">
    <property type="protein sequence ID" value="CAA38740.1"/>
    <property type="molecule type" value="Genomic_DNA"/>
</dbReference>
<dbReference type="PIR" id="S10613">
    <property type="entry name" value="S10613"/>
</dbReference>
<dbReference type="SMR" id="P23309"/>
<dbReference type="GO" id="GO:0022627">
    <property type="term" value="C:cytosolic small ribosomal subunit"/>
    <property type="evidence" value="ECO:0007669"/>
    <property type="project" value="TreeGrafter"/>
</dbReference>
<dbReference type="GO" id="GO:0003729">
    <property type="term" value="F:mRNA binding"/>
    <property type="evidence" value="ECO:0007669"/>
    <property type="project" value="UniProtKB-UniRule"/>
</dbReference>
<dbReference type="GO" id="GO:0019843">
    <property type="term" value="F:rRNA binding"/>
    <property type="evidence" value="ECO:0007669"/>
    <property type="project" value="UniProtKB-UniRule"/>
</dbReference>
<dbReference type="GO" id="GO:0003735">
    <property type="term" value="F:structural constituent of ribosome"/>
    <property type="evidence" value="ECO:0007669"/>
    <property type="project" value="InterPro"/>
</dbReference>
<dbReference type="GO" id="GO:0006412">
    <property type="term" value="P:translation"/>
    <property type="evidence" value="ECO:0007669"/>
    <property type="project" value="UniProtKB-UniRule"/>
</dbReference>
<dbReference type="CDD" id="cd02412">
    <property type="entry name" value="KH-II_30S_S3"/>
    <property type="match status" value="1"/>
</dbReference>
<dbReference type="FunFam" id="3.30.300.20:FF:000001">
    <property type="entry name" value="30S ribosomal protein S3"/>
    <property type="match status" value="1"/>
</dbReference>
<dbReference type="Gene3D" id="3.30.300.20">
    <property type="match status" value="1"/>
</dbReference>
<dbReference type="Gene3D" id="3.30.1140.32">
    <property type="entry name" value="Ribosomal protein S3, C-terminal domain"/>
    <property type="match status" value="1"/>
</dbReference>
<dbReference type="HAMAP" id="MF_01309_B">
    <property type="entry name" value="Ribosomal_uS3_B"/>
    <property type="match status" value="1"/>
</dbReference>
<dbReference type="InterPro" id="IPR004087">
    <property type="entry name" value="KH_dom"/>
</dbReference>
<dbReference type="InterPro" id="IPR015946">
    <property type="entry name" value="KH_dom-like_a/b"/>
</dbReference>
<dbReference type="InterPro" id="IPR004044">
    <property type="entry name" value="KH_dom_type_2"/>
</dbReference>
<dbReference type="InterPro" id="IPR009019">
    <property type="entry name" value="KH_sf_prok-type"/>
</dbReference>
<dbReference type="InterPro" id="IPR036419">
    <property type="entry name" value="Ribosomal_S3_C_sf"/>
</dbReference>
<dbReference type="InterPro" id="IPR005704">
    <property type="entry name" value="Ribosomal_uS3_bac-typ"/>
</dbReference>
<dbReference type="InterPro" id="IPR001351">
    <property type="entry name" value="Ribosomal_uS3_C"/>
</dbReference>
<dbReference type="InterPro" id="IPR018280">
    <property type="entry name" value="Ribosomal_uS3_CS"/>
</dbReference>
<dbReference type="NCBIfam" id="TIGR01009">
    <property type="entry name" value="rpsC_bact"/>
    <property type="match status" value="1"/>
</dbReference>
<dbReference type="PANTHER" id="PTHR11760">
    <property type="entry name" value="30S/40S RIBOSOMAL PROTEIN S3"/>
    <property type="match status" value="1"/>
</dbReference>
<dbReference type="PANTHER" id="PTHR11760:SF19">
    <property type="entry name" value="SMALL RIBOSOMAL SUBUNIT PROTEIN US3C"/>
    <property type="match status" value="1"/>
</dbReference>
<dbReference type="Pfam" id="PF07650">
    <property type="entry name" value="KH_2"/>
    <property type="match status" value="1"/>
</dbReference>
<dbReference type="Pfam" id="PF00189">
    <property type="entry name" value="Ribosomal_S3_C"/>
    <property type="match status" value="1"/>
</dbReference>
<dbReference type="SMART" id="SM00322">
    <property type="entry name" value="KH"/>
    <property type="match status" value="1"/>
</dbReference>
<dbReference type="SUPFAM" id="SSF54814">
    <property type="entry name" value="Prokaryotic type KH domain (KH-domain type II)"/>
    <property type="match status" value="1"/>
</dbReference>
<dbReference type="SUPFAM" id="SSF54821">
    <property type="entry name" value="Ribosomal protein S3 C-terminal domain"/>
    <property type="match status" value="1"/>
</dbReference>
<dbReference type="PROSITE" id="PS50823">
    <property type="entry name" value="KH_TYPE_2"/>
    <property type="match status" value="1"/>
</dbReference>
<dbReference type="PROSITE" id="PS00548">
    <property type="entry name" value="RIBOSOMAL_S3"/>
    <property type="match status" value="1"/>
</dbReference>
<feature type="initiator methionine" description="Removed" evidence="2">
    <location>
        <position position="1"/>
    </location>
</feature>
<feature type="chain" id="PRO_0000130072" description="Small ribosomal subunit protein uS3">
    <location>
        <begin position="2"/>
        <end position="218"/>
    </location>
</feature>
<feature type="domain" description="KH type-2" evidence="1">
    <location>
        <begin position="38"/>
        <end position="106"/>
    </location>
</feature>
<organism>
    <name type="scientific">Geobacillus stearothermophilus</name>
    <name type="common">Bacillus stearothermophilus</name>
    <dbReference type="NCBI Taxonomy" id="1422"/>
    <lineage>
        <taxon>Bacteria</taxon>
        <taxon>Bacillati</taxon>
        <taxon>Bacillota</taxon>
        <taxon>Bacilli</taxon>
        <taxon>Bacillales</taxon>
        <taxon>Anoxybacillaceae</taxon>
        <taxon>Geobacillus</taxon>
    </lineage>
</organism>
<evidence type="ECO:0000255" key="1">
    <source>
        <dbReference type="HAMAP-Rule" id="MF_01309"/>
    </source>
</evidence>
<evidence type="ECO:0000269" key="2">
    <source>
    </source>
</evidence>
<evidence type="ECO:0000305" key="3"/>
<name>RS3_GEOSE</name>
<reference key="1">
    <citation type="journal article" date="1990" name="Biol. Chem. Hoppe-Seyler">
        <title>Nucleotide sequences of Bacillus stearothermophilus ribosomal protein genes: part of the ribosomal S10 operon.</title>
        <authorList>
            <person name="Kroemer W.J."/>
            <person name="Hatakeyama T."/>
            <person name="Kimura M."/>
        </authorList>
    </citation>
    <scope>NUCLEOTIDE SEQUENCE [GENOMIC DNA]</scope>
    <source>
        <strain>ATCC 29609 / DSM 2027 / NCA 1503 / NCIMB 8924</strain>
    </source>
</reference>
<reference key="2">
    <citation type="journal article" date="1974" name="FEBS Lett.">
        <title>Procaryotic ribosomal proteins: N-terminal sequence homologies and structural correspondence of 30 S ribosomal proteins from Escherichia coli and Bacillus stearothermophilus.</title>
        <authorList>
            <person name="Yaguchi M."/>
            <person name="Matheson A.T."/>
            <person name="Visentin L.P."/>
        </authorList>
    </citation>
    <scope>PROTEIN SEQUENCE OF 2-16</scope>
    <source>
        <strain>DSM 13240 / CIP 106956 / 10</strain>
    </source>
</reference>